<keyword id="KW-0106">Calcium</keyword>
<keyword id="KW-0143">Chaperone</keyword>
<keyword id="KW-1015">Disulfide bond</keyword>
<keyword id="KW-0256">Endoplasmic reticulum</keyword>
<keyword id="KW-0325">Glycoprotein</keyword>
<keyword id="KW-0430">Lectin</keyword>
<keyword id="KW-0472">Membrane</keyword>
<keyword id="KW-0479">Metal-binding</keyword>
<keyword id="KW-0677">Repeat</keyword>
<keyword id="KW-0732">Signal</keyword>
<keyword id="KW-0812">Transmembrane</keyword>
<keyword id="KW-1133">Transmembrane helix</keyword>
<accession>O82709</accession>
<reference key="1">
    <citation type="journal article" date="1999" name="DNA Cell Biol.">
        <title>Calnexin from Pisum sativum: cloning of the cDNA and characterization of the encoded protein.</title>
        <authorList>
            <person name="Ehtesham N.Z."/>
            <person name="Phan T.N."/>
            <person name="Gaikwad A."/>
            <person name="Sopory S.K."/>
            <person name="Tuteja N."/>
        </authorList>
    </citation>
    <scope>NUCLEOTIDE SEQUENCE [MRNA]</scope>
    <source>
        <tissue>Leaf</tissue>
    </source>
</reference>
<organism>
    <name type="scientific">Pisum sativum</name>
    <name type="common">Garden pea</name>
    <name type="synonym">Lathyrus oleraceus</name>
    <dbReference type="NCBI Taxonomy" id="3888"/>
    <lineage>
        <taxon>Eukaryota</taxon>
        <taxon>Viridiplantae</taxon>
        <taxon>Streptophyta</taxon>
        <taxon>Embryophyta</taxon>
        <taxon>Tracheophyta</taxon>
        <taxon>Spermatophyta</taxon>
        <taxon>Magnoliopsida</taxon>
        <taxon>eudicotyledons</taxon>
        <taxon>Gunneridae</taxon>
        <taxon>Pentapetalae</taxon>
        <taxon>rosids</taxon>
        <taxon>fabids</taxon>
        <taxon>Fabales</taxon>
        <taxon>Fabaceae</taxon>
        <taxon>Papilionoideae</taxon>
        <taxon>50 kb inversion clade</taxon>
        <taxon>NPAAA clade</taxon>
        <taxon>Hologalegina</taxon>
        <taxon>IRL clade</taxon>
        <taxon>Fabeae</taxon>
        <taxon>Pisum</taxon>
    </lineage>
</organism>
<comment type="function">
    <text evidence="1">Calcium-binding protein that interacts with newly synthesized monoglucosylated glycoproteins in the endoplasmic reticulum. It may act in assisting protein assembly and/or in the retention within the ER of unassembled protein subunits. It seems to play a major role in the quality control apparatus of the ER by the retention of incorrectly folded proteins (By similarity).</text>
</comment>
<comment type="subcellular location">
    <subcellularLocation>
        <location evidence="1">Endoplasmic reticulum membrane</location>
        <topology evidence="1">Single-pass type I membrane protein</topology>
    </subcellularLocation>
</comment>
<comment type="tissue specificity">
    <text>In vegetative and flowering tissues.</text>
</comment>
<comment type="similarity">
    <text evidence="5">Belongs to the calreticulin family.</text>
</comment>
<proteinExistence type="evidence at transcript level"/>
<evidence type="ECO:0000250" key="1"/>
<evidence type="ECO:0000250" key="2">
    <source>
        <dbReference type="UniProtKB" id="P14211"/>
    </source>
</evidence>
<evidence type="ECO:0000255" key="3"/>
<evidence type="ECO:0000256" key="4">
    <source>
        <dbReference type="SAM" id="MobiDB-lite"/>
    </source>
</evidence>
<evidence type="ECO:0000305" key="5"/>
<protein>
    <recommendedName>
        <fullName>Calnexin homolog</fullName>
    </recommendedName>
</protein>
<feature type="signal peptide" evidence="3">
    <location>
        <begin position="1"/>
        <end position="26"/>
    </location>
</feature>
<feature type="chain" id="PRO_0000004205" description="Calnexin homolog">
    <location>
        <begin position="27"/>
        <end position="551"/>
    </location>
</feature>
<feature type="topological domain" description="Lumenal" evidence="3">
    <location>
        <begin position="27"/>
        <end position="480"/>
    </location>
</feature>
<feature type="transmembrane region" description="Helical" evidence="3">
    <location>
        <begin position="481"/>
        <end position="501"/>
    </location>
</feature>
<feature type="topological domain" description="Cytoplasmic" evidence="3">
    <location>
        <begin position="502"/>
        <end position="551"/>
    </location>
</feature>
<feature type="repeat" description="1-1">
    <location>
        <begin position="235"/>
        <end position="246"/>
    </location>
</feature>
<feature type="repeat" description="1-2">
    <location>
        <begin position="252"/>
        <end position="263"/>
    </location>
</feature>
<feature type="repeat" description="1-3">
    <location>
        <begin position="271"/>
        <end position="282"/>
    </location>
</feature>
<feature type="repeat" description="1-4">
    <location>
        <begin position="289"/>
        <end position="299"/>
    </location>
</feature>
<feature type="repeat" description="2-1">
    <location>
        <begin position="303"/>
        <end position="313"/>
    </location>
</feature>
<feature type="repeat" description="2-2">
    <location>
        <begin position="322"/>
        <end position="332"/>
    </location>
</feature>
<feature type="repeat" description="2-3">
    <location>
        <begin position="336"/>
        <end position="346"/>
    </location>
</feature>
<feature type="repeat" description="2-4">
    <location>
        <begin position="350"/>
        <end position="360"/>
    </location>
</feature>
<feature type="region of interest" description="Disordered" evidence="4">
    <location>
        <begin position="226"/>
        <end position="330"/>
    </location>
</feature>
<feature type="region of interest" description="P domain (Extended arm)" evidence="1">
    <location>
        <begin position="233"/>
        <end position="364"/>
    </location>
</feature>
<feature type="region of interest" description="4 X approximate repeats">
    <location>
        <begin position="235"/>
        <end position="299"/>
    </location>
</feature>
<feature type="region of interest" description="4 X approximate repeats">
    <location>
        <begin position="303"/>
        <end position="360"/>
    </location>
</feature>
<feature type="region of interest" description="Disordered" evidence="4">
    <location>
        <begin position="510"/>
        <end position="551"/>
    </location>
</feature>
<feature type="compositionally biased region" description="Basic and acidic residues" evidence="4">
    <location>
        <begin position="234"/>
        <end position="269"/>
    </location>
</feature>
<feature type="compositionally biased region" description="Basic and acidic residues" evidence="4">
    <location>
        <begin position="276"/>
        <end position="295"/>
    </location>
</feature>
<feature type="compositionally biased region" description="Acidic residues" evidence="4">
    <location>
        <begin position="296"/>
        <end position="305"/>
    </location>
</feature>
<feature type="compositionally biased region" description="Basic and acidic residues" evidence="4">
    <location>
        <begin position="526"/>
        <end position="539"/>
    </location>
</feature>
<feature type="binding site" evidence="1">
    <location>
        <position position="44"/>
    </location>
    <ligand>
        <name>Ca(2+)</name>
        <dbReference type="ChEBI" id="CHEBI:29108"/>
    </ligand>
</feature>
<feature type="binding site" evidence="1">
    <location>
        <position position="75"/>
    </location>
    <ligand>
        <name>Ca(2+)</name>
        <dbReference type="ChEBI" id="CHEBI:29108"/>
    </ligand>
</feature>
<feature type="binding site" evidence="2">
    <location>
        <position position="122"/>
    </location>
    <ligand>
        <name>an alpha-D-glucoside</name>
        <dbReference type="ChEBI" id="CHEBI:22390"/>
    </ligand>
</feature>
<feature type="binding site" evidence="2">
    <location>
        <position position="124"/>
    </location>
    <ligand>
        <name>an alpha-D-glucoside</name>
        <dbReference type="ChEBI" id="CHEBI:22390"/>
    </ligand>
</feature>
<feature type="binding site" evidence="2">
    <location>
        <position position="144"/>
    </location>
    <ligand>
        <name>an alpha-D-glucoside</name>
        <dbReference type="ChEBI" id="CHEBI:22390"/>
    </ligand>
</feature>
<feature type="binding site" evidence="2">
    <location>
        <position position="151"/>
    </location>
    <ligand>
        <name>an alpha-D-glucoside</name>
        <dbReference type="ChEBI" id="CHEBI:22390"/>
    </ligand>
</feature>
<feature type="binding site" evidence="2">
    <location>
        <position position="379"/>
    </location>
    <ligand>
        <name>an alpha-D-glucoside</name>
        <dbReference type="ChEBI" id="CHEBI:22390"/>
    </ligand>
</feature>
<feature type="binding site" evidence="1">
    <location>
        <position position="390"/>
    </location>
    <ligand>
        <name>Ca(2+)</name>
        <dbReference type="ChEBI" id="CHEBI:29108"/>
    </ligand>
</feature>
<feature type="glycosylation site" description="N-linked (GlcNAc...) asparagine" evidence="3">
    <location>
        <position position="140"/>
    </location>
</feature>
<feature type="glycosylation site" description="N-linked (GlcNAc...) asparagine" evidence="3">
    <location>
        <position position="478"/>
    </location>
</feature>
<feature type="disulfide bond" evidence="1">
    <location>
        <begin position="118"/>
        <end position="153"/>
    </location>
</feature>
<feature type="disulfide bond" evidence="1">
    <location>
        <begin position="315"/>
        <end position="321"/>
    </location>
</feature>
<name>CALX_PEA</name>
<sequence>MVDRKEIPLAMGLLAVLLFFVASSSSFHLVRASDEVDDAIFYESFDEDFDNRWIVSGKEEYNGVWKHSKSEGHDDFGLLVSEPARKYAIVKELDAPVSLKDGTVVLQFETRLQNGLECGGAYIKYLQTQESGWKPKGFDNESGYSIMFGPDRCGATNKVHFIFRHKNPKTGKHVEHHLKFPPSVPSDKLSHVYTAVLKDDNEVSILIDGEEKKKANFLSSEDFEPALIPSKTIPDPDDKKPEDWDERAKIPDPEAVKPEDWDEDAPREIIDEEAEKPEPWLDHEPEVDDPEAKPEDWDDEEDGEWEAPKIENPKCEAAPGCGEWKRPTKSNPAYKGKWSAPYIDNPNYKGIWKPQEIPNPEYFELEKPDFEPIAAIGIEIWTMQDGILFDNVLIAKDDKIAESYRETTWKPKFNIEKEKQKHEEEAAAAAAARSESEGIAGIQKKAFDLLYKIADIAFLSGQKEKIIEIIEKGEKQPNLTIGIIVSVVIVFVSIFFRLIFGGKKPANVEANVEKKKTNTETTSKQDGGEKEDNKEKEETANPPRRRPKRDN</sequence>
<dbReference type="EMBL" id="Y17329">
    <property type="protein sequence ID" value="CAA76741.1"/>
    <property type="molecule type" value="mRNA"/>
</dbReference>
<dbReference type="SMR" id="O82709"/>
<dbReference type="GO" id="GO:0005789">
    <property type="term" value="C:endoplasmic reticulum membrane"/>
    <property type="evidence" value="ECO:0007669"/>
    <property type="project" value="UniProtKB-SubCell"/>
</dbReference>
<dbReference type="GO" id="GO:0005509">
    <property type="term" value="F:calcium ion binding"/>
    <property type="evidence" value="ECO:0000304"/>
    <property type="project" value="AgBase"/>
</dbReference>
<dbReference type="GO" id="GO:0030246">
    <property type="term" value="F:carbohydrate binding"/>
    <property type="evidence" value="ECO:0007669"/>
    <property type="project" value="UniProtKB-KW"/>
</dbReference>
<dbReference type="GO" id="GO:0051082">
    <property type="term" value="F:unfolded protein binding"/>
    <property type="evidence" value="ECO:0007669"/>
    <property type="project" value="InterPro"/>
</dbReference>
<dbReference type="GO" id="GO:0036503">
    <property type="term" value="P:ERAD pathway"/>
    <property type="evidence" value="ECO:0007669"/>
    <property type="project" value="TreeGrafter"/>
</dbReference>
<dbReference type="GO" id="GO:0006457">
    <property type="term" value="P:protein folding"/>
    <property type="evidence" value="ECO:0007669"/>
    <property type="project" value="InterPro"/>
</dbReference>
<dbReference type="FunFam" id="2.10.250.10:FF:000001">
    <property type="entry name" value="Calnexin homolog"/>
    <property type="match status" value="1"/>
</dbReference>
<dbReference type="FunFam" id="2.60.120.200:FF:000048">
    <property type="entry name" value="Calnexin homolog"/>
    <property type="match status" value="1"/>
</dbReference>
<dbReference type="Gene3D" id="2.60.120.200">
    <property type="match status" value="1"/>
</dbReference>
<dbReference type="Gene3D" id="2.10.250.10">
    <property type="entry name" value="Calreticulin/calnexin, P domain"/>
    <property type="match status" value="1"/>
</dbReference>
<dbReference type="InterPro" id="IPR001580">
    <property type="entry name" value="Calret/calnex"/>
</dbReference>
<dbReference type="InterPro" id="IPR018124">
    <property type="entry name" value="Calret/calnex_CS"/>
</dbReference>
<dbReference type="InterPro" id="IPR009033">
    <property type="entry name" value="Calreticulin/calnexin_P_dom_sf"/>
</dbReference>
<dbReference type="InterPro" id="IPR013320">
    <property type="entry name" value="ConA-like_dom_sf"/>
</dbReference>
<dbReference type="PANTHER" id="PTHR11073:SF59">
    <property type="entry name" value="CALNEXIN HOMOLOG"/>
    <property type="match status" value="1"/>
</dbReference>
<dbReference type="PANTHER" id="PTHR11073">
    <property type="entry name" value="CALRETICULIN AND CALNEXIN"/>
    <property type="match status" value="1"/>
</dbReference>
<dbReference type="Pfam" id="PF00262">
    <property type="entry name" value="Calreticulin"/>
    <property type="match status" value="1"/>
</dbReference>
<dbReference type="PRINTS" id="PR00626">
    <property type="entry name" value="CALRETICULIN"/>
</dbReference>
<dbReference type="SUPFAM" id="SSF49899">
    <property type="entry name" value="Concanavalin A-like lectins/glucanases"/>
    <property type="match status" value="1"/>
</dbReference>
<dbReference type="SUPFAM" id="SSF63887">
    <property type="entry name" value="P-domain of calnexin/calreticulin"/>
    <property type="match status" value="1"/>
</dbReference>
<dbReference type="PROSITE" id="PS00803">
    <property type="entry name" value="CALRETICULIN_1"/>
    <property type="match status" value="1"/>
</dbReference>
<dbReference type="PROSITE" id="PS00804">
    <property type="entry name" value="CALRETICULIN_2"/>
    <property type="match status" value="1"/>
</dbReference>
<dbReference type="PROSITE" id="PS00805">
    <property type="entry name" value="CALRETICULIN_REPEAT"/>
    <property type="match status" value="2"/>
</dbReference>